<gene>
    <name type="primary">icaD</name>
    <name type="ordered locus">SERP2294</name>
</gene>
<feature type="chain" id="PRO_0000084142" description="Poly-beta-1,6-N-acetyl-D-glucosamine synthesis protein IcaD">
    <location>
        <begin position="1"/>
        <end position="101"/>
    </location>
</feature>
<feature type="transmembrane region" description="Helical" evidence="1">
    <location>
        <begin position="21"/>
        <end position="43"/>
    </location>
</feature>
<feature type="transmembrane region" description="Helical" evidence="1">
    <location>
        <begin position="71"/>
        <end position="93"/>
    </location>
</feature>
<sequence>MVKPRQRQYPTVTSYLNIVRESLFITISGVFWMYCIVVMIVYIGTLINSQMESVITIRIALNVENTEIYKLFGWMSLFVLIIFIFFTFSLAFQKYKKGRDI</sequence>
<reference key="1">
    <citation type="journal article" date="1996" name="Mol. Microbiol.">
        <title>Molecular basis of intercellular adhesion in the biofilm-forming Staphylococcus epidermidis.</title>
        <authorList>
            <person name="Heilmann C."/>
            <person name="Schweitzer O."/>
            <person name="Gerke C."/>
            <person name="Vanittanakom N."/>
            <person name="Mack D."/>
            <person name="Goetz F."/>
        </authorList>
    </citation>
    <scope>NUCLEOTIDE SEQUENCE [GENOMIC DNA]</scope>
</reference>
<reference key="2">
    <citation type="journal article" date="2005" name="J. Bacteriol.">
        <title>Insights on evolution of virulence and resistance from the complete genome analysis of an early methicillin-resistant Staphylococcus aureus strain and a biofilm-producing methicillin-resistant Staphylococcus epidermidis strain.</title>
        <authorList>
            <person name="Gill S.R."/>
            <person name="Fouts D.E."/>
            <person name="Archer G.L."/>
            <person name="Mongodin E.F."/>
            <person name="DeBoy R.T."/>
            <person name="Ravel J."/>
            <person name="Paulsen I.T."/>
            <person name="Kolonay J.F."/>
            <person name="Brinkac L.M."/>
            <person name="Beanan M.J."/>
            <person name="Dodson R.J."/>
            <person name="Daugherty S.C."/>
            <person name="Madupu R."/>
            <person name="Angiuoli S.V."/>
            <person name="Durkin A.S."/>
            <person name="Haft D.H."/>
            <person name="Vamathevan J.J."/>
            <person name="Khouri H."/>
            <person name="Utterback T.R."/>
            <person name="Lee C."/>
            <person name="Dimitrov G."/>
            <person name="Jiang L."/>
            <person name="Qin H."/>
            <person name="Weidman J."/>
            <person name="Tran K."/>
            <person name="Kang K.H."/>
            <person name="Hance I.R."/>
            <person name="Nelson K.E."/>
            <person name="Fraser C.M."/>
        </authorList>
    </citation>
    <scope>NUCLEOTIDE SEQUENCE [LARGE SCALE GENOMIC DNA]</scope>
    <source>
        <strain>ATCC 35984 / DSM 28319 / BCRC 17069 / CCUG 31568 / BM 3577 / RP62A</strain>
    </source>
</reference>
<reference key="3">
    <citation type="journal article" date="1998" name="J. Biol. Chem.">
        <title>Characterization of the N-acetylglucosaminyltransferase activity involved in the biosynthesis of the Staphylococcus epidermidis polysaccharide intercellular adhesin.</title>
        <authorList>
            <person name="Gerke C."/>
            <person name="Kraft A."/>
            <person name="Sussmuth R."/>
            <person name="Schweitzer O."/>
            <person name="Goetz F."/>
        </authorList>
    </citation>
    <scope>FUNCTION IN PIA SYNTHESIS</scope>
    <scope>DISRUPTION PHENOTYPE</scope>
    <scope>SUBCELLULAR LOCATION</scope>
</reference>
<dbReference type="EMBL" id="U43366">
    <property type="protein sequence ID" value="AAC06120.1"/>
    <property type="molecule type" value="Genomic_DNA"/>
</dbReference>
<dbReference type="EMBL" id="CP000029">
    <property type="protein sequence ID" value="AAW53183.1"/>
    <property type="molecule type" value="Genomic_DNA"/>
</dbReference>
<dbReference type="RefSeq" id="WP_002477257.1">
    <property type="nucleotide sequence ID" value="NC_002976.3"/>
</dbReference>
<dbReference type="SMR" id="Q5HKP9"/>
<dbReference type="STRING" id="176279.SERP2294"/>
<dbReference type="KEGG" id="ser:SERP2294"/>
<dbReference type="eggNOG" id="ENOG50305E9">
    <property type="taxonomic scope" value="Bacteria"/>
</dbReference>
<dbReference type="HOGENOM" id="CLU_2289916_0_0_9"/>
<dbReference type="Proteomes" id="UP000000531">
    <property type="component" value="Chromosome"/>
</dbReference>
<dbReference type="GO" id="GO:0005886">
    <property type="term" value="C:plasma membrane"/>
    <property type="evidence" value="ECO:0007669"/>
    <property type="project" value="UniProtKB-SubCell"/>
</dbReference>
<dbReference type="InterPro" id="IPR020510">
    <property type="entry name" value="IcaD"/>
</dbReference>
<dbReference type="NCBIfam" id="TIGR03932">
    <property type="entry name" value="PIA_icaD"/>
    <property type="match status" value="1"/>
</dbReference>
<organism>
    <name type="scientific">Staphylococcus epidermidis (strain ATCC 35984 / DSM 28319 / BCRC 17069 / CCUG 31568 / BM 3577 / RP62A)</name>
    <dbReference type="NCBI Taxonomy" id="176279"/>
    <lineage>
        <taxon>Bacteria</taxon>
        <taxon>Bacillati</taxon>
        <taxon>Bacillota</taxon>
        <taxon>Bacilli</taxon>
        <taxon>Bacillales</taxon>
        <taxon>Staphylococcaceae</taxon>
        <taxon>Staphylococcus</taxon>
    </lineage>
</organism>
<evidence type="ECO:0000255" key="1"/>
<evidence type="ECO:0000269" key="2">
    <source>
    </source>
</evidence>
<evidence type="ECO:0000305" key="3"/>
<proteinExistence type="evidence at protein level"/>
<accession>Q5HKP9</accession>
<accession>O54214</accession>
<protein>
    <recommendedName>
        <fullName>Poly-beta-1,6-N-acetyl-D-glucosamine synthesis protein IcaD</fullName>
        <shortName>PGA synthesis protein IcaD</shortName>
        <shortName>Poly-beta-1,6-GlcNAc synthesis protein IcaD</shortName>
    </recommendedName>
    <alternativeName>
        <fullName>Biofilm polysaccharide intercellular adhesin synthesis protein IcaD</fullName>
        <shortName>Biofilm PIA synthesis protein IcaD</shortName>
    </alternativeName>
    <alternativeName>
        <fullName>Intercellular adhesion protein D</fullName>
    </alternativeName>
</protein>
<keyword id="KW-1003">Cell membrane</keyword>
<keyword id="KW-0472">Membrane</keyword>
<keyword id="KW-1185">Reference proteome</keyword>
<keyword id="KW-0812">Transmembrane</keyword>
<keyword id="KW-1133">Transmembrane helix</keyword>
<name>ICAD_STAEQ</name>
<comment type="function">
    <text evidence="2">Necessary for the synthesis of poly-beta-1,6-N-acetyl-D-glucosamine (PNAG, also referred to as PIA), a biofilm adhesin polysaccharide. Is required for full IcaA N-acetylglucosaminyltransferase activity.</text>
</comment>
<comment type="subcellular location">
    <subcellularLocation>
        <location evidence="2">Cell membrane</location>
        <topology evidence="2">Multi-pass membrane protein</topology>
    </subcellularLocation>
</comment>
<comment type="disruption phenotype">
    <text evidence="2">Loss of cell aggregation and PIA production.</text>
</comment>
<comment type="similarity">
    <text evidence="3">Belongs to the IcaD family.</text>
</comment>